<dbReference type="EC" id="2.7.7.89" evidence="1"/>
<dbReference type="EC" id="2.7.7.42" evidence="1"/>
<dbReference type="EMBL" id="AL513382">
    <property type="protein sequence ID" value="CAD07726.1"/>
    <property type="molecule type" value="Genomic_DNA"/>
</dbReference>
<dbReference type="EMBL" id="AE014613">
    <property type="protein sequence ID" value="AAO70664.1"/>
    <property type="molecule type" value="Genomic_DNA"/>
</dbReference>
<dbReference type="RefSeq" id="NP_457592.1">
    <property type="nucleotide sequence ID" value="NC_003198.1"/>
</dbReference>
<dbReference type="RefSeq" id="WP_000188297.1">
    <property type="nucleotide sequence ID" value="NZ_WSUR01000003.1"/>
</dbReference>
<dbReference type="SMR" id="Q8Z3N1"/>
<dbReference type="STRING" id="220341.gene:17587235"/>
<dbReference type="KEGG" id="stt:t3121"/>
<dbReference type="KEGG" id="sty:STY3380"/>
<dbReference type="PATRIC" id="fig|220341.7.peg.3441"/>
<dbReference type="eggNOG" id="COG1391">
    <property type="taxonomic scope" value="Bacteria"/>
</dbReference>
<dbReference type="HOGENOM" id="CLU_006233_0_1_6"/>
<dbReference type="OMA" id="EFMVQYA"/>
<dbReference type="OrthoDB" id="9759366at2"/>
<dbReference type="Proteomes" id="UP000000541">
    <property type="component" value="Chromosome"/>
</dbReference>
<dbReference type="Proteomes" id="UP000002670">
    <property type="component" value="Chromosome"/>
</dbReference>
<dbReference type="GO" id="GO:0005829">
    <property type="term" value="C:cytosol"/>
    <property type="evidence" value="ECO:0007669"/>
    <property type="project" value="TreeGrafter"/>
</dbReference>
<dbReference type="GO" id="GO:0008882">
    <property type="term" value="F:[glutamate-ammonia-ligase] adenylyltransferase activity"/>
    <property type="evidence" value="ECO:0007669"/>
    <property type="project" value="UniProtKB-UniRule"/>
</dbReference>
<dbReference type="GO" id="GO:0047388">
    <property type="term" value="F:[glutamine synthetase]-adenylyl-L-tyrosine phosphorylase activity"/>
    <property type="evidence" value="ECO:0007669"/>
    <property type="project" value="UniProtKB-EC"/>
</dbReference>
<dbReference type="GO" id="GO:0005524">
    <property type="term" value="F:ATP binding"/>
    <property type="evidence" value="ECO:0007669"/>
    <property type="project" value="UniProtKB-UniRule"/>
</dbReference>
<dbReference type="GO" id="GO:0000287">
    <property type="term" value="F:magnesium ion binding"/>
    <property type="evidence" value="ECO:0007669"/>
    <property type="project" value="UniProtKB-UniRule"/>
</dbReference>
<dbReference type="GO" id="GO:0000820">
    <property type="term" value="P:regulation of glutamine family amino acid metabolic process"/>
    <property type="evidence" value="ECO:0007669"/>
    <property type="project" value="UniProtKB-UniRule"/>
</dbReference>
<dbReference type="CDD" id="cd05401">
    <property type="entry name" value="NT_GlnE_GlnD_like"/>
    <property type="match status" value="2"/>
</dbReference>
<dbReference type="FunFam" id="1.10.4050.10:FF:000001">
    <property type="entry name" value="Bifunctional glutamine synthetase adenylyltransferase/adenylyl-removing enzyme"/>
    <property type="match status" value="1"/>
</dbReference>
<dbReference type="FunFam" id="1.20.120.1510:FF:000001">
    <property type="entry name" value="Bifunctional glutamine synthetase adenylyltransferase/adenylyl-removing enzyme"/>
    <property type="match status" value="1"/>
</dbReference>
<dbReference type="FunFam" id="1.20.120.330:FF:000005">
    <property type="entry name" value="Bifunctional glutamine synthetase adenylyltransferase/adenylyl-removing enzyme"/>
    <property type="match status" value="1"/>
</dbReference>
<dbReference type="FunFam" id="1.20.120.330:FF:000008">
    <property type="entry name" value="Bifunctional glutamine synthetase adenylyltransferase/adenylyl-removing enzyme"/>
    <property type="match status" value="1"/>
</dbReference>
<dbReference type="FunFam" id="3.30.460.10:FF:000009">
    <property type="entry name" value="Bifunctional glutamine synthetase adenylyltransferase/adenylyl-removing enzyme"/>
    <property type="match status" value="1"/>
</dbReference>
<dbReference type="FunFam" id="3.30.460.10:FF:000014">
    <property type="entry name" value="Bifunctional glutamine synthetase adenylyltransferase/adenylyl-removing enzyme"/>
    <property type="match status" value="1"/>
</dbReference>
<dbReference type="Gene3D" id="1.20.120.1510">
    <property type="match status" value="1"/>
</dbReference>
<dbReference type="Gene3D" id="3.30.460.10">
    <property type="entry name" value="Beta Polymerase, domain 2"/>
    <property type="match status" value="2"/>
</dbReference>
<dbReference type="Gene3D" id="1.10.4050.10">
    <property type="entry name" value="Glutamine synthase adenylyltransferase GlnE"/>
    <property type="match status" value="1"/>
</dbReference>
<dbReference type="Gene3D" id="1.20.120.330">
    <property type="entry name" value="Nucleotidyltransferases domain 2"/>
    <property type="match status" value="2"/>
</dbReference>
<dbReference type="HAMAP" id="MF_00802">
    <property type="entry name" value="GlnE"/>
    <property type="match status" value="1"/>
</dbReference>
<dbReference type="InterPro" id="IPR023057">
    <property type="entry name" value="GlnE"/>
</dbReference>
<dbReference type="InterPro" id="IPR005190">
    <property type="entry name" value="GlnE_rpt_dom"/>
</dbReference>
<dbReference type="InterPro" id="IPR043519">
    <property type="entry name" value="NT_sf"/>
</dbReference>
<dbReference type="InterPro" id="IPR013546">
    <property type="entry name" value="PII_UdlTrfase/GS_AdlTrfase"/>
</dbReference>
<dbReference type="NCBIfam" id="NF008292">
    <property type="entry name" value="PRK11072.1"/>
    <property type="match status" value="1"/>
</dbReference>
<dbReference type="PANTHER" id="PTHR30621:SF0">
    <property type="entry name" value="BIFUNCTIONAL GLUTAMINE SYNTHETASE ADENYLYLTRANSFERASE_ADENYLYL-REMOVING ENZYME"/>
    <property type="match status" value="1"/>
</dbReference>
<dbReference type="PANTHER" id="PTHR30621">
    <property type="entry name" value="GLUTAMINE SYNTHETASE ADENYLYLTRANSFERASE"/>
    <property type="match status" value="1"/>
</dbReference>
<dbReference type="Pfam" id="PF08335">
    <property type="entry name" value="GlnD_UR_UTase"/>
    <property type="match status" value="2"/>
</dbReference>
<dbReference type="Pfam" id="PF03710">
    <property type="entry name" value="GlnE"/>
    <property type="match status" value="2"/>
</dbReference>
<dbReference type="SUPFAM" id="SSF81301">
    <property type="entry name" value="Nucleotidyltransferase"/>
    <property type="match status" value="2"/>
</dbReference>
<dbReference type="SUPFAM" id="SSF81593">
    <property type="entry name" value="Nucleotidyltransferase substrate binding subunit/domain"/>
    <property type="match status" value="2"/>
</dbReference>
<keyword id="KW-0067">ATP-binding</keyword>
<keyword id="KW-0460">Magnesium</keyword>
<keyword id="KW-0511">Multifunctional enzyme</keyword>
<keyword id="KW-0547">Nucleotide-binding</keyword>
<keyword id="KW-0548">Nucleotidyltransferase</keyword>
<keyword id="KW-0808">Transferase</keyword>
<comment type="function">
    <text evidence="1">Involved in the regulation of glutamine synthetase GlnA, a key enzyme in the process to assimilate ammonia. When cellular nitrogen levels are high, the C-terminal adenylyl transferase (AT) inactivates GlnA by covalent transfer of an adenylyl group from ATP to specific tyrosine residue of GlnA, thus reducing its activity. Conversely, when nitrogen levels are low, the N-terminal adenylyl removase (AR) activates GlnA by removing the adenylyl group by phosphorolysis, increasing its activity. The regulatory region of GlnE binds the signal transduction protein PII (GlnB) which indicates the nitrogen status of the cell.</text>
</comment>
<comment type="catalytic activity">
    <reaction evidence="1">
        <text>[glutamine synthetase]-O(4)-(5'-adenylyl)-L-tyrosine + phosphate = [glutamine synthetase]-L-tyrosine + ADP</text>
        <dbReference type="Rhea" id="RHEA:43716"/>
        <dbReference type="Rhea" id="RHEA-COMP:10660"/>
        <dbReference type="Rhea" id="RHEA-COMP:10661"/>
        <dbReference type="ChEBI" id="CHEBI:43474"/>
        <dbReference type="ChEBI" id="CHEBI:46858"/>
        <dbReference type="ChEBI" id="CHEBI:83624"/>
        <dbReference type="ChEBI" id="CHEBI:456216"/>
        <dbReference type="EC" id="2.7.7.89"/>
    </reaction>
</comment>
<comment type="catalytic activity">
    <reaction evidence="1">
        <text>[glutamine synthetase]-L-tyrosine + ATP = [glutamine synthetase]-O(4)-(5'-adenylyl)-L-tyrosine + diphosphate</text>
        <dbReference type="Rhea" id="RHEA:18589"/>
        <dbReference type="Rhea" id="RHEA-COMP:10660"/>
        <dbReference type="Rhea" id="RHEA-COMP:10661"/>
        <dbReference type="ChEBI" id="CHEBI:30616"/>
        <dbReference type="ChEBI" id="CHEBI:33019"/>
        <dbReference type="ChEBI" id="CHEBI:46858"/>
        <dbReference type="ChEBI" id="CHEBI:83624"/>
        <dbReference type="EC" id="2.7.7.42"/>
    </reaction>
</comment>
<comment type="cofactor">
    <cofactor evidence="1">
        <name>Mg(2+)</name>
        <dbReference type="ChEBI" id="CHEBI:18420"/>
    </cofactor>
</comment>
<comment type="similarity">
    <text evidence="1">Belongs to the GlnE family.</text>
</comment>
<sequence>MTPLSSPLSQYWQTVVERLPEGFTETSLSAQAKSVLTFSDFALDSVIAHPEWLAELESASPQADEWRHYAGWLQEALAGVCDDASLMRELRLFRRRIMVRIAWAQTLSLVDDETILQQLSHLAETLIVGARDWLYAACCREWGTPCNPQGVPQPLLILGMGKLGGGELNFSSDIDLIFAWPEHGETRGGRRELDNAQFFTRLGQRLIKALDQPTMDGFVYRVDMRLRPFGDSGPLVLSFAALEDYYQEQGRDWERYAMVKARLMGDNDDAWSRELRAMLRPFVFRRYIDFSVIQSLRNMKGMIAREVRRRGLKDNIKLGAGGIREIEFIVQVFQLIRGGREPSLQSRSLLPTLDAIAALHLLPENDVAQLRVAYLFLRRLENLLQSINDEQTQTLPADDLNRARLAWGMKAENWPQLVGELTDHMANVRRVFNELIGDDEADTPQEEERSEPWREVWQDALQEDDSTPVLAHLADEDRRQVLTLIADFRKELDKRPIGPRGRQVLDQLMPHLLADVCSREDAAVTLSRITPLLAGIVTRTTYLELLSEFPGALKHLIMLCAASPMIASQLARYPLLLDELLDPGTLYQPTATDAYRDELRQYLLRVPEEDEEQQLEALRQFKQAQLLRIAAADIAGTLPVMKVSDHLTWLAEAMIDAVVQQAWTQMVARYGQPAHLDERQGRGFAVVGYGKLGGWELGYSSDLDLIFLHDCPMDVMTNGEREIDGRQFYLRLAQRIMHLFSTRTSSGILYEVDARLRPSGAAGMLVTSADAFADYQQHEAWTWEHQALVRARVVYGDPQLTSQFDAVRRTIMTTARDGKTLQTEVREMREKMRAHLGNKHRDRFDIKADEGGITDIEFIAQYLVLRYAHEKPKLTRWSDNVRILELLAQNGIMDEHEAQALTVAYTTLRDELHHLALQELPGHVAQTCFSKERALVQASWRKWLVAV</sequence>
<protein>
    <recommendedName>
        <fullName evidence="1">Bifunctional glutamine synthetase adenylyltransferase/adenylyl-removing enzyme</fullName>
    </recommendedName>
    <alternativeName>
        <fullName evidence="1">ATP:glutamine synthetase adenylyltransferase</fullName>
    </alternativeName>
    <alternativeName>
        <fullName evidence="1">ATase</fullName>
    </alternativeName>
    <domain>
        <recommendedName>
            <fullName evidence="1">Glutamine synthetase adenylyl-L-tyrosine phosphorylase</fullName>
            <ecNumber evidence="1">2.7.7.89</ecNumber>
        </recommendedName>
        <alternativeName>
            <fullName evidence="1">Adenylyl removase</fullName>
            <shortName evidence="1">AR</shortName>
            <shortName evidence="1">AT-N</shortName>
        </alternativeName>
    </domain>
    <domain>
        <recommendedName>
            <fullName evidence="1">Glutamine synthetase adenylyl transferase</fullName>
            <ecNumber evidence="1">2.7.7.42</ecNumber>
        </recommendedName>
        <alternativeName>
            <fullName evidence="1">Adenylyl transferase</fullName>
            <shortName evidence="1">AT</shortName>
            <shortName evidence="1">AT-C</shortName>
        </alternativeName>
    </domain>
</protein>
<accession>Q8Z3N1</accession>
<accession>Q7C753</accession>
<organism>
    <name type="scientific">Salmonella typhi</name>
    <dbReference type="NCBI Taxonomy" id="90370"/>
    <lineage>
        <taxon>Bacteria</taxon>
        <taxon>Pseudomonadati</taxon>
        <taxon>Pseudomonadota</taxon>
        <taxon>Gammaproteobacteria</taxon>
        <taxon>Enterobacterales</taxon>
        <taxon>Enterobacteriaceae</taxon>
        <taxon>Salmonella</taxon>
    </lineage>
</organism>
<feature type="chain" id="PRO_0000209275" description="Bifunctional glutamine synthetase adenylyltransferase/adenylyl-removing enzyme">
    <location>
        <begin position="1"/>
        <end position="947"/>
    </location>
</feature>
<feature type="region of interest" description="Adenylyl removase" evidence="1">
    <location>
        <begin position="1"/>
        <end position="440"/>
    </location>
</feature>
<feature type="region of interest" description="Adenylyl transferase" evidence="1">
    <location>
        <begin position="450"/>
        <end position="947"/>
    </location>
</feature>
<proteinExistence type="inferred from homology"/>
<gene>
    <name evidence="1" type="primary">glnE</name>
    <name type="ordered locus">STY3380</name>
    <name type="ordered locus">t3121</name>
</gene>
<reference key="1">
    <citation type="journal article" date="2001" name="Nature">
        <title>Complete genome sequence of a multiple drug resistant Salmonella enterica serovar Typhi CT18.</title>
        <authorList>
            <person name="Parkhill J."/>
            <person name="Dougan G."/>
            <person name="James K.D."/>
            <person name="Thomson N.R."/>
            <person name="Pickard D."/>
            <person name="Wain J."/>
            <person name="Churcher C.M."/>
            <person name="Mungall K.L."/>
            <person name="Bentley S.D."/>
            <person name="Holden M.T.G."/>
            <person name="Sebaihia M."/>
            <person name="Baker S."/>
            <person name="Basham D."/>
            <person name="Brooks K."/>
            <person name="Chillingworth T."/>
            <person name="Connerton P."/>
            <person name="Cronin A."/>
            <person name="Davis P."/>
            <person name="Davies R.M."/>
            <person name="Dowd L."/>
            <person name="White N."/>
            <person name="Farrar J."/>
            <person name="Feltwell T."/>
            <person name="Hamlin N."/>
            <person name="Haque A."/>
            <person name="Hien T.T."/>
            <person name="Holroyd S."/>
            <person name="Jagels K."/>
            <person name="Krogh A."/>
            <person name="Larsen T.S."/>
            <person name="Leather S."/>
            <person name="Moule S."/>
            <person name="O'Gaora P."/>
            <person name="Parry C."/>
            <person name="Quail M.A."/>
            <person name="Rutherford K.M."/>
            <person name="Simmonds M."/>
            <person name="Skelton J."/>
            <person name="Stevens K."/>
            <person name="Whitehead S."/>
            <person name="Barrell B.G."/>
        </authorList>
    </citation>
    <scope>NUCLEOTIDE SEQUENCE [LARGE SCALE GENOMIC DNA]</scope>
    <source>
        <strain>CT18</strain>
    </source>
</reference>
<reference key="2">
    <citation type="journal article" date="2003" name="J. Bacteriol.">
        <title>Comparative genomics of Salmonella enterica serovar Typhi strains Ty2 and CT18.</title>
        <authorList>
            <person name="Deng W."/>
            <person name="Liou S.-R."/>
            <person name="Plunkett G. III"/>
            <person name="Mayhew G.F."/>
            <person name="Rose D.J."/>
            <person name="Burland V."/>
            <person name="Kodoyianni V."/>
            <person name="Schwartz D.C."/>
            <person name="Blattner F.R."/>
        </authorList>
    </citation>
    <scope>NUCLEOTIDE SEQUENCE [LARGE SCALE GENOMIC DNA]</scope>
    <source>
        <strain>ATCC 700931 / Ty2</strain>
    </source>
</reference>
<name>GLNE_SALTI</name>
<evidence type="ECO:0000255" key="1">
    <source>
        <dbReference type="HAMAP-Rule" id="MF_00802"/>
    </source>
</evidence>